<sequence length="915" mass="102232">MVQLGKLLRVLTLMKFPCCVLEVLLCVLAAAARGQEMYAPHSIRIEGDVTLGGLFPVHAKGPSGVPCGDIKRENGIHRLEAMLYALDQINSDPNLLPNVTLGARILDTCSRDTYALEQSLTFVQALIQKDTSDVRCTNGEPPVFVKPEKVVGVIGASGSSVSIMVANILRLFQIPQISYASTAPELSDDRRYDFFSRVVPPDSFQAQAMVDIVKALGWNYVSTLASEGSYGEKGVESFTQISKEAGGLCIAQSVRIPQERKDRTIDFDRIIKQLLDTPNSRAVVIFANDEDIKQILAAAKRADQVGHFLWVGSDSWGSKINPLHQHEDIAEGAITIQPKRATVEGFDAYFTSRTLENNRRNVWFAEYWEENFNCKLTISGSKKEDTDRKCTGQERIGKDSNYEQEGKVQFVIDAVYAMAHALHHMNKDLCADYRGVCPEMEQAGGKKLLKYIRHVNFNGSAGTPVMFNKNGDAPGRYDIFQYQTTNTTNPGYRLIGQWTDELQLNIEDMQWGKGVREIPSSVCTLPCKPGQRKKTQKGTPCCWTCEPCDGYQYQFDEMTCQHCPYDQRPNENRTGCQNIPIIKLEWHSPWAVIPVFLAMLGIIATIFVMATFIRYNDTPIVRASGRELSYVLLTGIFLCYIITFLMIAKPDVAVCSFRRVFLGLGMCISYAALLTKTNRIYRIFEQGKKSVTAPRLISPTSQLAITSSLISVQLLGVFIWFGVDPPNIIIDYDEHKTMNPEQARGVLKCDITDLQIICSLGYSILLMVTCTVYAIKTRGVPENFNEAKPIGFTMYTTCIVWLAFIPIFFGTAQSAEKLYIQTTTLTISMNLSASVALGMLYMPKVYIIIFHPELNVQKRKRSFKAVVTAATMSSRLSHKPSDRPNGEAKTELCENVDPNSPAAKKKYVSYNNLVI</sequence>
<comment type="function">
    <text evidence="2 8 9 10">G-protein coupled receptor activated by glutamate that regulates axon outgrowth through the MAPK-cAMP-PKA signaling pathway during neuronal development (By similarity). Ligand binding causes a conformation change that triggers signaling via guanine nucleotide-binding proteins (G proteins) and modulates the activity of downstream effectors, such as adenylate cyclase that it inhibits.</text>
</comment>
<comment type="subunit">
    <text evidence="2 6">Homodimer (By similarity). Interacts with PICK1.</text>
</comment>
<comment type="interaction">
    <interactant intactId="EBI-6936416">
        <id>P35400</id>
    </interactant>
    <interactant intactId="EBI-936113">
        <id>P97879</id>
        <label>Grip1</label>
    </interactant>
    <organismsDiffer>false</organismsDiffer>
    <experiments>3</experiments>
</comment>
<comment type="interaction">
    <interactant intactId="EBI-6936416">
        <id>P35400</id>
    </interactant>
    <interactant intactId="EBI-77728">
        <id>Q9EP80</id>
        <label>Pick1</label>
    </interactant>
    <organismsDiffer>false</organismsDiffer>
    <experiments>2</experiments>
</comment>
<comment type="interaction">
    <interactant intactId="EBI-6936416">
        <id>P35400</id>
    </interactant>
    <interactant intactId="EBI-80049">
        <id>P63088</id>
        <label>Ppp1cc</label>
    </interactant>
    <organismsDiffer>false</organismsDiffer>
    <experiments>4</experiments>
</comment>
<comment type="subcellular location">
    <subcellularLocation>
        <location evidence="2">Cell membrane</location>
        <topology evidence="2">Multi-pass membrane protein</topology>
    </subcellularLocation>
</comment>
<comment type="tissue specificity">
    <text evidence="9 10">Widely distributed throughout the brain.</text>
</comment>
<comment type="similarity">
    <text evidence="11">Belongs to the G-protein coupled receptor 3 family.</text>
</comment>
<feature type="signal peptide" evidence="4">
    <location>
        <begin position="1"/>
        <end position="34"/>
    </location>
</feature>
<feature type="chain" id="PRO_0000012940" description="Metabotropic glutamate receptor 7">
    <location>
        <begin position="35"/>
        <end position="915"/>
    </location>
</feature>
<feature type="topological domain" description="Extracellular" evidence="4">
    <location>
        <begin position="35"/>
        <end position="590"/>
    </location>
</feature>
<feature type="transmembrane region" description="Helical; Name=1" evidence="4">
    <location>
        <begin position="591"/>
        <end position="615"/>
    </location>
</feature>
<feature type="topological domain" description="Cytoplasmic" evidence="4">
    <location>
        <begin position="616"/>
        <end position="627"/>
    </location>
</feature>
<feature type="transmembrane region" description="Helical; Name=2" evidence="4">
    <location>
        <begin position="628"/>
        <end position="648"/>
    </location>
</feature>
<feature type="topological domain" description="Extracellular" evidence="4">
    <location>
        <begin position="649"/>
        <end position="654"/>
    </location>
</feature>
<feature type="transmembrane region" description="Helical; Name=3" evidence="4">
    <location>
        <begin position="655"/>
        <end position="675"/>
    </location>
</feature>
<feature type="topological domain" description="Cytoplasmic" evidence="4">
    <location>
        <begin position="676"/>
        <end position="702"/>
    </location>
</feature>
<feature type="transmembrane region" description="Helical; Name=4" evidence="4">
    <location>
        <begin position="703"/>
        <end position="723"/>
    </location>
</feature>
<feature type="topological domain" description="Extracellular" evidence="4">
    <location>
        <begin position="724"/>
        <end position="753"/>
    </location>
</feature>
<feature type="transmembrane region" description="Helical; Name=5" evidence="4">
    <location>
        <begin position="754"/>
        <end position="775"/>
    </location>
</feature>
<feature type="topological domain" description="Cytoplasmic" evidence="4">
    <location>
        <begin position="776"/>
        <end position="788"/>
    </location>
</feature>
<feature type="transmembrane region" description="Helical; Name=6" evidence="4">
    <location>
        <begin position="789"/>
        <end position="810"/>
    </location>
</feature>
<feature type="topological domain" description="Extracellular" evidence="4">
    <location>
        <begin position="811"/>
        <end position="825"/>
    </location>
</feature>
<feature type="transmembrane region" description="Helical; Name=7" evidence="4">
    <location>
        <begin position="826"/>
        <end position="850"/>
    </location>
</feature>
<feature type="topological domain" description="Cytoplasmic" evidence="4">
    <location>
        <begin position="851"/>
        <end position="915"/>
    </location>
</feature>
<feature type="region of interest" description="Disordered" evidence="5">
    <location>
        <begin position="874"/>
        <end position="895"/>
    </location>
</feature>
<feature type="compositionally biased region" description="Basic and acidic residues" evidence="5">
    <location>
        <begin position="879"/>
        <end position="892"/>
    </location>
</feature>
<feature type="binding site" evidence="1">
    <location>
        <position position="159"/>
    </location>
    <ligand>
        <name>L-glutamate</name>
        <dbReference type="ChEBI" id="CHEBI:29985"/>
    </ligand>
</feature>
<feature type="binding site" evidence="1">
    <location>
        <begin position="180"/>
        <end position="182"/>
    </location>
    <ligand>
        <name>L-glutamate</name>
        <dbReference type="ChEBI" id="CHEBI:29985"/>
    </ligand>
</feature>
<feature type="binding site" evidence="1">
    <location>
        <position position="230"/>
    </location>
    <ligand>
        <name>L-glutamate</name>
        <dbReference type="ChEBI" id="CHEBI:29985"/>
    </ligand>
</feature>
<feature type="binding site" evidence="1">
    <location>
        <position position="314"/>
    </location>
    <ligand>
        <name>L-glutamate</name>
        <dbReference type="ChEBI" id="CHEBI:29985"/>
    </ligand>
</feature>
<feature type="binding site" evidence="1">
    <location>
        <position position="407"/>
    </location>
    <ligand>
        <name>L-glutamate</name>
        <dbReference type="ChEBI" id="CHEBI:29985"/>
    </ligand>
</feature>
<feature type="modified residue" description="Phosphoserine" evidence="3">
    <location>
        <position position="900"/>
    </location>
</feature>
<feature type="glycosylation site" description="N-linked (GlcNAc...) asparagine" evidence="4">
    <location>
        <position position="98"/>
    </location>
</feature>
<feature type="glycosylation site" description="N-linked (GlcNAc...) asparagine" evidence="4">
    <location>
        <position position="458"/>
    </location>
</feature>
<feature type="glycosylation site" description="N-linked (GlcNAc...) asparagine" evidence="4">
    <location>
        <position position="486"/>
    </location>
</feature>
<feature type="glycosylation site" description="N-linked (GlcNAc...) asparagine" evidence="4">
    <location>
        <position position="572"/>
    </location>
</feature>
<feature type="disulfide bond" evidence="7">
    <location>
        <begin position="67"/>
        <end position="109"/>
    </location>
</feature>
<feature type="disulfide bond" evidence="1">
    <location>
        <begin position="249"/>
        <end position="541"/>
    </location>
</feature>
<feature type="disulfide bond" evidence="7">
    <location>
        <begin position="374"/>
        <end position="390"/>
    </location>
</feature>
<feature type="disulfide bond" evidence="7">
    <location>
        <begin position="430"/>
        <end position="437"/>
    </location>
</feature>
<feature type="disulfide bond" evidence="1">
    <location>
        <begin position="523"/>
        <end position="542"/>
    </location>
</feature>
<feature type="disulfide bond" evidence="1">
    <location>
        <begin position="527"/>
        <end position="545"/>
    </location>
</feature>
<feature type="disulfide bond" evidence="1">
    <location>
        <begin position="548"/>
        <end position="560"/>
    </location>
</feature>
<feature type="disulfide bond" evidence="1">
    <location>
        <begin position="563"/>
        <end position="576"/>
    </location>
</feature>
<feature type="strand" evidence="12">
    <location>
        <begin position="42"/>
        <end position="45"/>
    </location>
</feature>
<feature type="strand" evidence="12">
    <location>
        <begin position="48"/>
        <end position="55"/>
    </location>
</feature>
<feature type="strand" evidence="12">
    <location>
        <begin position="58"/>
        <end position="60"/>
    </location>
</feature>
<feature type="strand" evidence="12">
    <location>
        <begin position="62"/>
        <end position="64"/>
    </location>
</feature>
<feature type="strand" evidence="12">
    <location>
        <begin position="66"/>
        <end position="70"/>
    </location>
</feature>
<feature type="helix" evidence="12">
    <location>
        <begin position="72"/>
        <end position="91"/>
    </location>
</feature>
<feature type="strand" evidence="12">
    <location>
        <begin position="93"/>
        <end position="98"/>
    </location>
</feature>
<feature type="strand" evidence="12">
    <location>
        <begin position="101"/>
        <end position="107"/>
    </location>
</feature>
<feature type="helix" evidence="12">
    <location>
        <begin position="112"/>
        <end position="118"/>
    </location>
</feature>
<feature type="helix" evidence="12">
    <location>
        <begin position="119"/>
        <end position="126"/>
    </location>
</feature>
<feature type="strand" evidence="12">
    <location>
        <begin position="150"/>
        <end position="154"/>
    </location>
</feature>
<feature type="helix" evidence="12">
    <location>
        <begin position="159"/>
        <end position="165"/>
    </location>
</feature>
<feature type="helix" evidence="12">
    <location>
        <begin position="168"/>
        <end position="171"/>
    </location>
</feature>
<feature type="strand" evidence="12">
    <location>
        <begin position="176"/>
        <end position="180"/>
    </location>
</feature>
<feature type="helix" evidence="12">
    <location>
        <begin position="184"/>
        <end position="187"/>
    </location>
</feature>
<feature type="turn" evidence="12">
    <location>
        <begin position="189"/>
        <end position="192"/>
    </location>
</feature>
<feature type="strand" evidence="12">
    <location>
        <begin position="193"/>
        <end position="199"/>
    </location>
</feature>
<feature type="helix" evidence="12">
    <location>
        <begin position="202"/>
        <end position="215"/>
    </location>
</feature>
<feature type="strand" evidence="12">
    <location>
        <begin position="221"/>
        <end position="228"/>
    </location>
</feature>
<feature type="helix" evidence="12">
    <location>
        <begin position="229"/>
        <end position="244"/>
    </location>
</feature>
<feature type="strand" evidence="12">
    <location>
        <begin position="250"/>
        <end position="256"/>
    </location>
</feature>
<feature type="helix" evidence="12">
    <location>
        <begin position="265"/>
        <end position="274"/>
    </location>
</feature>
<feature type="strand" evidence="12">
    <location>
        <begin position="282"/>
        <end position="286"/>
    </location>
</feature>
<feature type="helix" evidence="12">
    <location>
        <begin position="289"/>
        <end position="301"/>
    </location>
</feature>
<feature type="turn" evidence="12">
    <location>
        <begin position="305"/>
        <end position="307"/>
    </location>
</feature>
<feature type="strand" evidence="12">
    <location>
        <begin position="308"/>
        <end position="312"/>
    </location>
</feature>
<feature type="turn" evidence="12">
    <location>
        <begin position="314"/>
        <end position="318"/>
    </location>
</feature>
<feature type="helix" evidence="12">
    <location>
        <begin position="321"/>
        <end position="323"/>
    </location>
</feature>
<feature type="helix" evidence="12">
    <location>
        <begin position="327"/>
        <end position="330"/>
    </location>
</feature>
<feature type="strand" evidence="12">
    <location>
        <begin position="334"/>
        <end position="339"/>
    </location>
</feature>
<feature type="helix" evidence="12">
    <location>
        <begin position="344"/>
        <end position="350"/>
    </location>
</feature>
<feature type="turn" evidence="12">
    <location>
        <begin position="355"/>
        <end position="357"/>
    </location>
</feature>
<feature type="helix" evidence="12">
    <location>
        <begin position="364"/>
        <end position="371"/>
    </location>
</feature>
<feature type="helix" evidence="12">
    <location>
        <begin position="394"/>
        <end position="397"/>
    </location>
</feature>
<feature type="helix" evidence="12">
    <location>
        <begin position="408"/>
        <end position="429"/>
    </location>
</feature>
<feature type="turn" evidence="12">
    <location>
        <begin position="438"/>
        <end position="443"/>
    </location>
</feature>
<feature type="helix" evidence="12">
    <location>
        <begin position="445"/>
        <end position="452"/>
    </location>
</feature>
<feature type="strand" evidence="12">
    <location>
        <begin position="477"/>
        <end position="483"/>
    </location>
</feature>
<feature type="strand" evidence="12">
    <location>
        <begin position="491"/>
        <end position="504"/>
    </location>
</feature>
<feature type="strand" evidence="12">
    <location>
        <begin position="506"/>
        <end position="508"/>
    </location>
</feature>
<organism>
    <name type="scientific">Rattus norvegicus</name>
    <name type="common">Rat</name>
    <dbReference type="NCBI Taxonomy" id="10116"/>
    <lineage>
        <taxon>Eukaryota</taxon>
        <taxon>Metazoa</taxon>
        <taxon>Chordata</taxon>
        <taxon>Craniata</taxon>
        <taxon>Vertebrata</taxon>
        <taxon>Euteleostomi</taxon>
        <taxon>Mammalia</taxon>
        <taxon>Eutheria</taxon>
        <taxon>Euarchontoglires</taxon>
        <taxon>Glires</taxon>
        <taxon>Rodentia</taxon>
        <taxon>Myomorpha</taxon>
        <taxon>Muroidea</taxon>
        <taxon>Muridae</taxon>
        <taxon>Murinae</taxon>
        <taxon>Rattus</taxon>
    </lineage>
</organism>
<protein>
    <recommendedName>
        <fullName>Metabotropic glutamate receptor 7</fullName>
        <shortName>mGluR7</shortName>
    </recommendedName>
</protein>
<accession>P35400</accession>
<evidence type="ECO:0000250" key="1"/>
<evidence type="ECO:0000250" key="2">
    <source>
        <dbReference type="UniProtKB" id="Q14831"/>
    </source>
</evidence>
<evidence type="ECO:0000250" key="3">
    <source>
        <dbReference type="UniProtKB" id="Q68ED2"/>
    </source>
</evidence>
<evidence type="ECO:0000255" key="4"/>
<evidence type="ECO:0000256" key="5">
    <source>
        <dbReference type="SAM" id="MobiDB-lite"/>
    </source>
</evidence>
<evidence type="ECO:0000269" key="6">
    <source>
    </source>
</evidence>
<evidence type="ECO:0000269" key="7">
    <source>
    </source>
</evidence>
<evidence type="ECO:0000269" key="8">
    <source>
    </source>
</evidence>
<evidence type="ECO:0000269" key="9">
    <source>
    </source>
</evidence>
<evidence type="ECO:0000269" key="10">
    <source>
    </source>
</evidence>
<evidence type="ECO:0000305" key="11"/>
<evidence type="ECO:0007829" key="12">
    <source>
        <dbReference type="PDB" id="2E4Z"/>
    </source>
</evidence>
<proteinExistence type="evidence at protein level"/>
<dbReference type="EMBL" id="D16817">
    <property type="protein sequence ID" value="BAA04092.1"/>
    <property type="molecule type" value="mRNA"/>
</dbReference>
<dbReference type="EMBL" id="U06832">
    <property type="protein sequence ID" value="AAA20655.1"/>
    <property type="molecule type" value="mRNA"/>
</dbReference>
<dbReference type="PIR" id="A49874">
    <property type="entry name" value="A49874"/>
</dbReference>
<dbReference type="RefSeq" id="NP_112302.1">
    <property type="nucleotide sequence ID" value="NM_031040.1"/>
</dbReference>
<dbReference type="PDB" id="2E4Z">
    <property type="method" value="X-ray"/>
    <property type="resolution" value="3.30 A"/>
    <property type="chains" value="A=33-521"/>
</dbReference>
<dbReference type="PDBsum" id="2E4Z"/>
<dbReference type="SMR" id="P35400"/>
<dbReference type="BioGRID" id="249569">
    <property type="interactions" value="9"/>
</dbReference>
<dbReference type="DIP" id="DIP-41145N"/>
<dbReference type="FunCoup" id="P35400">
    <property type="interactions" value="877"/>
</dbReference>
<dbReference type="IntAct" id="P35400">
    <property type="interactions" value="7"/>
</dbReference>
<dbReference type="MINT" id="P35400"/>
<dbReference type="STRING" id="10116.ENSRNOP00000053411"/>
<dbReference type="BindingDB" id="P35400"/>
<dbReference type="ChEMBL" id="CHEMBL3879"/>
<dbReference type="GuidetoPHARMACOLOGY" id="295"/>
<dbReference type="CarbonylDB" id="P35400"/>
<dbReference type="GlyCosmos" id="P35400">
    <property type="glycosylation" value="4 sites, No reported glycans"/>
</dbReference>
<dbReference type="GlyGen" id="P35400">
    <property type="glycosylation" value="4 sites"/>
</dbReference>
<dbReference type="iPTMnet" id="P35400"/>
<dbReference type="PhosphoSitePlus" id="P35400"/>
<dbReference type="PaxDb" id="10116-ENSRNOP00000053411"/>
<dbReference type="Ensembl" id="ENSRNOT00000056570.4">
    <property type="protein sequence ID" value="ENSRNOP00000053411.4"/>
    <property type="gene ID" value="ENSRNOG00000005662.7"/>
</dbReference>
<dbReference type="GeneID" id="81672"/>
<dbReference type="KEGG" id="rno:81672"/>
<dbReference type="AGR" id="RGD:619857"/>
<dbReference type="CTD" id="2917"/>
<dbReference type="RGD" id="619857">
    <property type="gene designation" value="Grm7"/>
</dbReference>
<dbReference type="eggNOG" id="KOG1056">
    <property type="taxonomic scope" value="Eukaryota"/>
</dbReference>
<dbReference type="GeneTree" id="ENSGT01030000234648"/>
<dbReference type="InParanoid" id="P35400"/>
<dbReference type="PhylomeDB" id="P35400"/>
<dbReference type="Reactome" id="R-RNO-418594">
    <property type="pathway name" value="G alpha (i) signalling events"/>
</dbReference>
<dbReference type="Reactome" id="R-RNO-420499">
    <property type="pathway name" value="Class C/3 (Metabotropic glutamate/pheromone receptors)"/>
</dbReference>
<dbReference type="EvolutionaryTrace" id="P35400"/>
<dbReference type="PRO" id="PR:P35400"/>
<dbReference type="Proteomes" id="UP000002494">
    <property type="component" value="Chromosome 4"/>
</dbReference>
<dbReference type="GO" id="GO:0032279">
    <property type="term" value="C:asymmetric synapse"/>
    <property type="evidence" value="ECO:0000314"/>
    <property type="project" value="RGD"/>
</dbReference>
<dbReference type="GO" id="GO:0030424">
    <property type="term" value="C:axon"/>
    <property type="evidence" value="ECO:0000314"/>
    <property type="project" value="RGD"/>
</dbReference>
<dbReference type="GO" id="GO:0043679">
    <property type="term" value="C:axon terminus"/>
    <property type="evidence" value="ECO:0000314"/>
    <property type="project" value="RGD"/>
</dbReference>
<dbReference type="GO" id="GO:0005938">
    <property type="term" value="C:cell cortex"/>
    <property type="evidence" value="ECO:0000266"/>
    <property type="project" value="RGD"/>
</dbReference>
<dbReference type="GO" id="GO:0009986">
    <property type="term" value="C:cell surface"/>
    <property type="evidence" value="ECO:0000314"/>
    <property type="project" value="UniProtKB"/>
</dbReference>
<dbReference type="GO" id="GO:0030425">
    <property type="term" value="C:dendrite"/>
    <property type="evidence" value="ECO:0000314"/>
    <property type="project" value="RGD"/>
</dbReference>
<dbReference type="GO" id="GO:0043198">
    <property type="term" value="C:dendritic shaft"/>
    <property type="evidence" value="ECO:0000314"/>
    <property type="project" value="RGD"/>
</dbReference>
<dbReference type="GO" id="GO:0098982">
    <property type="term" value="C:GABA-ergic synapse"/>
    <property type="evidence" value="ECO:0000314"/>
    <property type="project" value="SynGO"/>
</dbReference>
<dbReference type="GO" id="GO:0098978">
    <property type="term" value="C:glutamatergic synapse"/>
    <property type="evidence" value="ECO:0000314"/>
    <property type="project" value="SynGO"/>
</dbReference>
<dbReference type="GO" id="GO:0016020">
    <property type="term" value="C:membrane"/>
    <property type="evidence" value="ECO:0000266"/>
    <property type="project" value="RGD"/>
</dbReference>
<dbReference type="GO" id="GO:0043025">
    <property type="term" value="C:neuronal cell body"/>
    <property type="evidence" value="ECO:0000314"/>
    <property type="project" value="RGD"/>
</dbReference>
<dbReference type="GO" id="GO:0005886">
    <property type="term" value="C:plasma membrane"/>
    <property type="evidence" value="ECO:0000266"/>
    <property type="project" value="RGD"/>
</dbReference>
<dbReference type="GO" id="GO:0045211">
    <property type="term" value="C:postsynaptic membrane"/>
    <property type="evidence" value="ECO:0000314"/>
    <property type="project" value="UniProtKB"/>
</dbReference>
<dbReference type="GO" id="GO:0048786">
    <property type="term" value="C:presynaptic active zone"/>
    <property type="evidence" value="ECO:0000314"/>
    <property type="project" value="UniProtKB"/>
</dbReference>
<dbReference type="GO" id="GO:0048787">
    <property type="term" value="C:presynaptic active zone membrane"/>
    <property type="evidence" value="ECO:0000314"/>
    <property type="project" value="SynGO"/>
</dbReference>
<dbReference type="GO" id="GO:0042734">
    <property type="term" value="C:presynaptic membrane"/>
    <property type="evidence" value="ECO:0000314"/>
    <property type="project" value="RGD"/>
</dbReference>
<dbReference type="GO" id="GO:0032991">
    <property type="term" value="C:protein-containing complex"/>
    <property type="evidence" value="ECO:0000314"/>
    <property type="project" value="RGD"/>
</dbReference>
<dbReference type="GO" id="GO:0043235">
    <property type="term" value="C:receptor complex"/>
    <property type="evidence" value="ECO:0000266"/>
    <property type="project" value="RGD"/>
</dbReference>
<dbReference type="GO" id="GO:0043195">
    <property type="term" value="C:terminal bouton"/>
    <property type="evidence" value="ECO:0000314"/>
    <property type="project" value="RGD"/>
</dbReference>
<dbReference type="GO" id="GO:0001640">
    <property type="term" value="F:adenylate cyclase inhibiting G protein-coupled glutamate receptor activity"/>
    <property type="evidence" value="ECO:0000314"/>
    <property type="project" value="RGD"/>
</dbReference>
<dbReference type="GO" id="GO:0010855">
    <property type="term" value="F:adenylate cyclase inhibitor activity"/>
    <property type="evidence" value="ECO:0000266"/>
    <property type="project" value="RGD"/>
</dbReference>
<dbReference type="GO" id="GO:0005246">
    <property type="term" value="F:calcium channel regulator activity"/>
    <property type="evidence" value="ECO:0000266"/>
    <property type="project" value="RGD"/>
</dbReference>
<dbReference type="GO" id="GO:0048306">
    <property type="term" value="F:calcium-dependent protein binding"/>
    <property type="evidence" value="ECO:0000353"/>
    <property type="project" value="RGD"/>
</dbReference>
<dbReference type="GO" id="GO:0005516">
    <property type="term" value="F:calmodulin binding"/>
    <property type="evidence" value="ECO:0000353"/>
    <property type="project" value="UniProtKB"/>
</dbReference>
<dbReference type="GO" id="GO:0016595">
    <property type="term" value="F:glutamate binding"/>
    <property type="evidence" value="ECO:0000314"/>
    <property type="project" value="RGD"/>
</dbReference>
<dbReference type="GO" id="GO:0008066">
    <property type="term" value="F:glutamate receptor activity"/>
    <property type="evidence" value="ECO:0000266"/>
    <property type="project" value="RGD"/>
</dbReference>
<dbReference type="GO" id="GO:0001642">
    <property type="term" value="F:group III metabotropic glutamate receptor activity"/>
    <property type="evidence" value="ECO:0000314"/>
    <property type="project" value="RGD"/>
</dbReference>
<dbReference type="GO" id="GO:0042802">
    <property type="term" value="F:identical protein binding"/>
    <property type="evidence" value="ECO:0000353"/>
    <property type="project" value="RGD"/>
</dbReference>
<dbReference type="GO" id="GO:0030165">
    <property type="term" value="F:PDZ domain binding"/>
    <property type="evidence" value="ECO:0000353"/>
    <property type="project" value="RGD"/>
</dbReference>
<dbReference type="GO" id="GO:0046983">
    <property type="term" value="F:protein dimerization activity"/>
    <property type="evidence" value="ECO:0000250"/>
    <property type="project" value="UniProtKB"/>
</dbReference>
<dbReference type="GO" id="GO:0070905">
    <property type="term" value="F:serine binding"/>
    <property type="evidence" value="ECO:0000266"/>
    <property type="project" value="RGD"/>
</dbReference>
<dbReference type="GO" id="GO:0005245">
    <property type="term" value="F:voltage-gated calcium channel activity"/>
    <property type="evidence" value="ECO:0000266"/>
    <property type="project" value="RGD"/>
</dbReference>
<dbReference type="GO" id="GO:0007196">
    <property type="term" value="P:adenylate cyclase-inhibiting G protein-coupled glutamate receptor signaling pathway"/>
    <property type="evidence" value="ECO:0000314"/>
    <property type="project" value="RGD"/>
</dbReference>
<dbReference type="GO" id="GO:0030534">
    <property type="term" value="P:adult behavior"/>
    <property type="evidence" value="ECO:0000266"/>
    <property type="project" value="RGD"/>
</dbReference>
<dbReference type="GO" id="GO:0008306">
    <property type="term" value="P:associative learning"/>
    <property type="evidence" value="ECO:0000266"/>
    <property type="project" value="RGD"/>
</dbReference>
<dbReference type="GO" id="GO:0061564">
    <property type="term" value="P:axon development"/>
    <property type="evidence" value="ECO:0000250"/>
    <property type="project" value="UniProtKB"/>
</dbReference>
<dbReference type="GO" id="GO:0001662">
    <property type="term" value="P:behavioral fear response"/>
    <property type="evidence" value="ECO:0000266"/>
    <property type="project" value="RGD"/>
</dbReference>
<dbReference type="GO" id="GO:0007268">
    <property type="term" value="P:chemical synaptic transmission"/>
    <property type="evidence" value="ECO:0000266"/>
    <property type="project" value="RGD"/>
</dbReference>
<dbReference type="GO" id="GO:0001661">
    <property type="term" value="P:conditioned taste aversion"/>
    <property type="evidence" value="ECO:0000266"/>
    <property type="project" value="RGD"/>
</dbReference>
<dbReference type="GO" id="GO:0007216">
    <property type="term" value="P:G protein-coupled glutamate receptor signaling pathway"/>
    <property type="evidence" value="ECO:0000318"/>
    <property type="project" value="GO_Central"/>
</dbReference>
<dbReference type="GO" id="GO:0070085">
    <property type="term" value="P:glycosylation"/>
    <property type="evidence" value="ECO:0000266"/>
    <property type="project" value="RGD"/>
</dbReference>
<dbReference type="GO" id="GO:0007611">
    <property type="term" value="P:learning or memory"/>
    <property type="evidence" value="ECO:0000304"/>
    <property type="project" value="UniProtKB"/>
</dbReference>
<dbReference type="GO" id="GO:0007613">
    <property type="term" value="P:memory"/>
    <property type="evidence" value="ECO:0000266"/>
    <property type="project" value="RGD"/>
</dbReference>
<dbReference type="GO" id="GO:0033555">
    <property type="term" value="P:multicellular organismal response to stress"/>
    <property type="evidence" value="ECO:0000266"/>
    <property type="project" value="RGD"/>
</dbReference>
<dbReference type="GO" id="GO:0014050">
    <property type="term" value="P:negative regulation of glutamate secretion"/>
    <property type="evidence" value="ECO:0000314"/>
    <property type="project" value="RGD"/>
</dbReference>
<dbReference type="GO" id="GO:0043524">
    <property type="term" value="P:negative regulation of neuron apoptotic process"/>
    <property type="evidence" value="ECO:0000314"/>
    <property type="project" value="RGD"/>
</dbReference>
<dbReference type="GO" id="GO:0050877">
    <property type="term" value="P:nervous system process"/>
    <property type="evidence" value="ECO:0000266"/>
    <property type="project" value="RGD"/>
</dbReference>
<dbReference type="GO" id="GO:0099171">
    <property type="term" value="P:presynaptic modulation of chemical synaptic transmission"/>
    <property type="evidence" value="ECO:0000266"/>
    <property type="project" value="RGD"/>
</dbReference>
<dbReference type="GO" id="GO:0051966">
    <property type="term" value="P:regulation of synaptic transmission, glutamatergic"/>
    <property type="evidence" value="ECO:0000318"/>
    <property type="project" value="GO_Central"/>
</dbReference>
<dbReference type="GO" id="GO:0007605">
    <property type="term" value="P:sensory perception of sound"/>
    <property type="evidence" value="ECO:0000266"/>
    <property type="project" value="RGD"/>
</dbReference>
<dbReference type="GO" id="GO:0007614">
    <property type="term" value="P:short-term memory"/>
    <property type="evidence" value="ECO:0000266"/>
    <property type="project" value="RGD"/>
</dbReference>
<dbReference type="GO" id="GO:0019226">
    <property type="term" value="P:transmission of nerve impulse"/>
    <property type="evidence" value="ECO:0000266"/>
    <property type="project" value="RGD"/>
</dbReference>
<dbReference type="CDD" id="cd15451">
    <property type="entry name" value="7tmC_mGluR7"/>
    <property type="match status" value="1"/>
</dbReference>
<dbReference type="CDD" id="cd06376">
    <property type="entry name" value="PBP1_mGluR_groupIII"/>
    <property type="match status" value="1"/>
</dbReference>
<dbReference type="FunFam" id="3.40.50.2300:FF:000196">
    <property type="entry name" value="Glutamate metabotropic receptor 7"/>
    <property type="match status" value="1"/>
</dbReference>
<dbReference type="FunFam" id="3.40.50.2300:FF:000009">
    <property type="entry name" value="Glutamate receptor, metabotropic 4"/>
    <property type="match status" value="1"/>
</dbReference>
<dbReference type="FunFam" id="2.10.50.30:FF:000001">
    <property type="entry name" value="metabotropic glutamate receptor 1"/>
    <property type="match status" value="1"/>
</dbReference>
<dbReference type="FunFam" id="3.40.50.2300:FF:000176">
    <property type="entry name" value="metabotropic glutamate receptor 7"/>
    <property type="match status" value="1"/>
</dbReference>
<dbReference type="Gene3D" id="3.40.50.2300">
    <property type="match status" value="2"/>
</dbReference>
<dbReference type="Gene3D" id="2.10.50.30">
    <property type="entry name" value="GPCR, family 3, nine cysteines domain"/>
    <property type="match status" value="1"/>
</dbReference>
<dbReference type="InterPro" id="IPR001828">
    <property type="entry name" value="ANF_lig-bd_rcpt"/>
</dbReference>
<dbReference type="InterPro" id="IPR000337">
    <property type="entry name" value="GPCR_3"/>
</dbReference>
<dbReference type="InterPro" id="IPR011500">
    <property type="entry name" value="GPCR_3_9-Cys_dom"/>
</dbReference>
<dbReference type="InterPro" id="IPR038550">
    <property type="entry name" value="GPCR_3_9-Cys_sf"/>
</dbReference>
<dbReference type="InterPro" id="IPR017978">
    <property type="entry name" value="GPCR_3_C"/>
</dbReference>
<dbReference type="InterPro" id="IPR017979">
    <property type="entry name" value="GPCR_3_CS"/>
</dbReference>
<dbReference type="InterPro" id="IPR001883">
    <property type="entry name" value="GPCR_3_mGluR7"/>
</dbReference>
<dbReference type="InterPro" id="IPR000162">
    <property type="entry name" value="GPCR_3_mtglu_rcpt"/>
</dbReference>
<dbReference type="InterPro" id="IPR050726">
    <property type="entry name" value="mGluR"/>
</dbReference>
<dbReference type="InterPro" id="IPR028082">
    <property type="entry name" value="Peripla_BP_I"/>
</dbReference>
<dbReference type="PANTHER" id="PTHR24060">
    <property type="entry name" value="METABOTROPIC GLUTAMATE RECEPTOR"/>
    <property type="match status" value="1"/>
</dbReference>
<dbReference type="Pfam" id="PF00003">
    <property type="entry name" value="7tm_3"/>
    <property type="match status" value="1"/>
</dbReference>
<dbReference type="Pfam" id="PF01094">
    <property type="entry name" value="ANF_receptor"/>
    <property type="match status" value="1"/>
</dbReference>
<dbReference type="Pfam" id="PF07562">
    <property type="entry name" value="NCD3G"/>
    <property type="match status" value="1"/>
</dbReference>
<dbReference type="PRINTS" id="PR00248">
    <property type="entry name" value="GPCRMGR"/>
</dbReference>
<dbReference type="PRINTS" id="PR01057">
    <property type="entry name" value="MTABOTROPC7R"/>
</dbReference>
<dbReference type="PRINTS" id="PR00593">
    <property type="entry name" value="MTABOTROPICR"/>
</dbReference>
<dbReference type="SUPFAM" id="SSF53822">
    <property type="entry name" value="Periplasmic binding protein-like I"/>
    <property type="match status" value="1"/>
</dbReference>
<dbReference type="PROSITE" id="PS00979">
    <property type="entry name" value="G_PROTEIN_RECEP_F3_1"/>
    <property type="match status" value="1"/>
</dbReference>
<dbReference type="PROSITE" id="PS00980">
    <property type="entry name" value="G_PROTEIN_RECEP_F3_2"/>
    <property type="match status" value="1"/>
</dbReference>
<dbReference type="PROSITE" id="PS00981">
    <property type="entry name" value="G_PROTEIN_RECEP_F3_3"/>
    <property type="match status" value="1"/>
</dbReference>
<dbReference type="PROSITE" id="PS50259">
    <property type="entry name" value="G_PROTEIN_RECEP_F3_4"/>
    <property type="match status" value="1"/>
</dbReference>
<keyword id="KW-0002">3D-structure</keyword>
<keyword id="KW-1003">Cell membrane</keyword>
<keyword id="KW-1015">Disulfide bond</keyword>
<keyword id="KW-0297">G-protein coupled receptor</keyword>
<keyword id="KW-0325">Glycoprotein</keyword>
<keyword id="KW-0472">Membrane</keyword>
<keyword id="KW-0597">Phosphoprotein</keyword>
<keyword id="KW-0675">Receptor</keyword>
<keyword id="KW-1185">Reference proteome</keyword>
<keyword id="KW-0716">Sensory transduction</keyword>
<keyword id="KW-0732">Signal</keyword>
<keyword id="KW-0807">Transducer</keyword>
<keyword id="KW-0812">Transmembrane</keyword>
<keyword id="KW-1133">Transmembrane helix</keyword>
<name>GRM7_RAT</name>
<reference key="1">
    <citation type="journal article" date="1994" name="J. Biol. Chem.">
        <title>Molecular characterization of a new metabotropic glutamate receptor mGluR7 coupled to inhibitory cyclic AMP signal transduction.</title>
        <authorList>
            <person name="Okamoto N."/>
            <person name="Hori S."/>
            <person name="Akazawa C."/>
            <person name="Hayashi Y."/>
            <person name="Shigemoto R."/>
            <person name="Mizuno N."/>
            <person name="Nakanishi S."/>
        </authorList>
    </citation>
    <scope>NUCLEOTIDE SEQUENCE [MRNA]</scope>
    <scope>FUNCTION</scope>
    <scope>TISSUE SPECIFICITY</scope>
    <source>
        <strain>Sprague-Dawley</strain>
        <tissue>Brain</tissue>
    </source>
</reference>
<reference key="2">
    <citation type="journal article" date="1994" name="Mol. Pharmacol.">
        <title>Cloning and expression of a new member of the L-2-amino-4-phosphonobutyric acid-sensitive class of metabotropic glutamate receptors.</title>
        <authorList>
            <person name="Saugstad J.A."/>
            <person name="Kinzie J.M."/>
            <person name="Mulvihill E.R."/>
            <person name="Segerson T.P."/>
            <person name="Westbrook G.L."/>
        </authorList>
    </citation>
    <scope>NUCLEOTIDE SEQUENCE [MRNA]</scope>
    <scope>FUNCTION</scope>
    <scope>TISSUE SPECIFICITY</scope>
    <source>
        <strain>Sprague-Dawley</strain>
        <tissue>Olfactory bulb</tissue>
    </source>
</reference>
<reference key="3">
    <citation type="journal article" date="2000" name="Eur. J. Neurosci.">
        <title>Interaction of the C-terminal tail region of the metabotropic glutamate receptor 7 with the protein kinase C substrate PICK1.</title>
        <authorList>
            <person name="El Far O."/>
            <person name="Airas J."/>
            <person name="Wischmeyer E."/>
            <person name="Nehring R.B."/>
            <person name="Karschin A."/>
            <person name="Betz H."/>
        </authorList>
    </citation>
    <scope>INTERACTION WITH PICK1</scope>
</reference>
<reference key="4">
    <citation type="journal article" date="2007" name="Proc. Natl. Acad. Sci. U.S.A.">
        <title>Structures of the extracellular regions of the group II/III metabotropic glutamate receptors.</title>
        <authorList>
            <person name="Muto T."/>
            <person name="Tsuchiya D."/>
            <person name="Morikawa K."/>
            <person name="Jingami H."/>
        </authorList>
    </citation>
    <scope>X-RAY CRYSTALLOGRAPHY (3.3 ANGSTROMS) OF 33-521</scope>
    <scope>DISULFIDE BONDS</scope>
</reference>
<reference key="5">
    <citation type="journal article" date="2021" name="J. Neurosci.">
        <title>Pathogenic GRM7 mutations associated with neurodevelopmental disorders impair axon outgrowth and presynaptic terminal development.</title>
        <authorList>
            <person name="Song J.M."/>
            <person name="Kang M."/>
            <person name="Park D.H."/>
            <person name="Park S."/>
            <person name="Lee S."/>
            <person name="Suh Y.H."/>
        </authorList>
    </citation>
    <scope>FUNCTION</scope>
</reference>
<gene>
    <name type="primary">Grm7</name>
    <name type="synonym">Gprc1g</name>
    <name type="synonym">Mglur7</name>
</gene>